<feature type="chain" id="PRO_1000142275" description="Large ribosomal subunit protein uL22">
    <location>
        <begin position="1"/>
        <end position="117"/>
    </location>
</feature>
<keyword id="KW-0687">Ribonucleoprotein</keyword>
<keyword id="KW-0689">Ribosomal protein</keyword>
<keyword id="KW-0694">RNA-binding</keyword>
<keyword id="KW-0699">rRNA-binding</keyword>
<organism>
    <name type="scientific">Lacticaseibacillus casei (strain BL23)</name>
    <name type="common">Lactobacillus casei</name>
    <dbReference type="NCBI Taxonomy" id="543734"/>
    <lineage>
        <taxon>Bacteria</taxon>
        <taxon>Bacillati</taxon>
        <taxon>Bacillota</taxon>
        <taxon>Bacilli</taxon>
        <taxon>Lactobacillales</taxon>
        <taxon>Lactobacillaceae</taxon>
        <taxon>Lacticaseibacillus</taxon>
    </lineage>
</organism>
<reference key="1">
    <citation type="submission" date="2008-06" db="EMBL/GenBank/DDBJ databases">
        <title>Lactobacillus casei BL23 complete genome sequence.</title>
        <authorList>
            <person name="Maze A."/>
            <person name="Boel G."/>
            <person name="Bourand A."/>
            <person name="Loux V."/>
            <person name="Gibrat J.F."/>
            <person name="Zuniga M."/>
            <person name="Hartke A."/>
            <person name="Deutscher J."/>
        </authorList>
    </citation>
    <scope>NUCLEOTIDE SEQUENCE [LARGE SCALE GENOMIC DNA]</scope>
    <source>
        <strain>BL23</strain>
    </source>
</reference>
<accession>B3WAL2</accession>
<name>RL22_LACCB</name>
<sequence>MADQITSATATAKTVRIAARKARLVIDLIRGRDVAEALAILEFTPRSGSPIIEKVLKSAIANAEHNYDLDAQNLYVSKAYVNEGPTLKRFRPRAKGSASPINKRTSHVTVVVSEKEA</sequence>
<comment type="function">
    <text evidence="1">This protein binds specifically to 23S rRNA; its binding is stimulated by other ribosomal proteins, e.g. L4, L17, and L20. It is important during the early stages of 50S assembly. It makes multiple contacts with different domains of the 23S rRNA in the assembled 50S subunit and ribosome (By similarity).</text>
</comment>
<comment type="function">
    <text evidence="1">The globular domain of the protein is located near the polypeptide exit tunnel on the outside of the subunit, while an extended beta-hairpin is found that lines the wall of the exit tunnel in the center of the 70S ribosome.</text>
</comment>
<comment type="subunit">
    <text evidence="1">Part of the 50S ribosomal subunit.</text>
</comment>
<comment type="similarity">
    <text evidence="1">Belongs to the universal ribosomal protein uL22 family.</text>
</comment>
<gene>
    <name evidence="1" type="primary">rplV</name>
    <name type="ordered locus">LCABL_26650</name>
</gene>
<evidence type="ECO:0000255" key="1">
    <source>
        <dbReference type="HAMAP-Rule" id="MF_01331"/>
    </source>
</evidence>
<evidence type="ECO:0000305" key="2"/>
<dbReference type="EMBL" id="FM177140">
    <property type="protein sequence ID" value="CAQ67731.1"/>
    <property type="molecule type" value="Genomic_DNA"/>
</dbReference>
<dbReference type="SMR" id="B3WAL2"/>
<dbReference type="KEGG" id="lcb:LCABL_26650"/>
<dbReference type="HOGENOM" id="CLU_083987_3_3_9"/>
<dbReference type="GO" id="GO:0022625">
    <property type="term" value="C:cytosolic large ribosomal subunit"/>
    <property type="evidence" value="ECO:0007669"/>
    <property type="project" value="TreeGrafter"/>
</dbReference>
<dbReference type="GO" id="GO:0019843">
    <property type="term" value="F:rRNA binding"/>
    <property type="evidence" value="ECO:0007669"/>
    <property type="project" value="UniProtKB-UniRule"/>
</dbReference>
<dbReference type="GO" id="GO:0003735">
    <property type="term" value="F:structural constituent of ribosome"/>
    <property type="evidence" value="ECO:0007669"/>
    <property type="project" value="InterPro"/>
</dbReference>
<dbReference type="GO" id="GO:0006412">
    <property type="term" value="P:translation"/>
    <property type="evidence" value="ECO:0007669"/>
    <property type="project" value="UniProtKB-UniRule"/>
</dbReference>
<dbReference type="CDD" id="cd00336">
    <property type="entry name" value="Ribosomal_L22"/>
    <property type="match status" value="1"/>
</dbReference>
<dbReference type="FunFam" id="3.90.470.10:FF:000001">
    <property type="entry name" value="50S ribosomal protein L22"/>
    <property type="match status" value="1"/>
</dbReference>
<dbReference type="Gene3D" id="3.90.470.10">
    <property type="entry name" value="Ribosomal protein L22/L17"/>
    <property type="match status" value="1"/>
</dbReference>
<dbReference type="HAMAP" id="MF_01331_B">
    <property type="entry name" value="Ribosomal_uL22_B"/>
    <property type="match status" value="1"/>
</dbReference>
<dbReference type="InterPro" id="IPR001063">
    <property type="entry name" value="Ribosomal_uL22"/>
</dbReference>
<dbReference type="InterPro" id="IPR005727">
    <property type="entry name" value="Ribosomal_uL22_bac/chlpt-type"/>
</dbReference>
<dbReference type="InterPro" id="IPR047867">
    <property type="entry name" value="Ribosomal_uL22_bac/org-type"/>
</dbReference>
<dbReference type="InterPro" id="IPR018260">
    <property type="entry name" value="Ribosomal_uL22_CS"/>
</dbReference>
<dbReference type="InterPro" id="IPR036394">
    <property type="entry name" value="Ribosomal_uL22_sf"/>
</dbReference>
<dbReference type="NCBIfam" id="TIGR01044">
    <property type="entry name" value="rplV_bact"/>
    <property type="match status" value="1"/>
</dbReference>
<dbReference type="PANTHER" id="PTHR13501">
    <property type="entry name" value="CHLOROPLAST 50S RIBOSOMAL PROTEIN L22-RELATED"/>
    <property type="match status" value="1"/>
</dbReference>
<dbReference type="PANTHER" id="PTHR13501:SF8">
    <property type="entry name" value="LARGE RIBOSOMAL SUBUNIT PROTEIN UL22M"/>
    <property type="match status" value="1"/>
</dbReference>
<dbReference type="Pfam" id="PF00237">
    <property type="entry name" value="Ribosomal_L22"/>
    <property type="match status" value="1"/>
</dbReference>
<dbReference type="SUPFAM" id="SSF54843">
    <property type="entry name" value="Ribosomal protein L22"/>
    <property type="match status" value="1"/>
</dbReference>
<dbReference type="PROSITE" id="PS00464">
    <property type="entry name" value="RIBOSOMAL_L22"/>
    <property type="match status" value="1"/>
</dbReference>
<protein>
    <recommendedName>
        <fullName evidence="1">Large ribosomal subunit protein uL22</fullName>
    </recommendedName>
    <alternativeName>
        <fullName evidence="2">50S ribosomal protein L22</fullName>
    </alternativeName>
</protein>
<proteinExistence type="inferred from homology"/>